<comment type="function">
    <text evidence="2">Involved in inducible protoporphyrin IX influx and heme efflux.</text>
</comment>
<comment type="subcellular location">
    <subcellularLocation>
        <location evidence="4">Cell membrane</location>
        <topology evidence="4">Multi-pass membrane protein</topology>
    </subcellularLocation>
</comment>
<comment type="induction">
    <text evidence="2">By oxygen and heme deficiency.</text>
</comment>
<comment type="PTM">
    <text evidence="3">N-glycosylated.</text>
</comment>
<comment type="similarity">
    <text evidence="4">Belongs to the lipid-translocating exporter (LTE) (TC 9.A.26.1) family.</text>
</comment>
<gene>
    <name type="primary">PUG1</name>
    <name type="ordered locus">YER185W</name>
</gene>
<reference key="1">
    <citation type="journal article" date="1997" name="Nature">
        <title>The nucleotide sequence of Saccharomyces cerevisiae chromosome V.</title>
        <authorList>
            <person name="Dietrich F.S."/>
            <person name="Mulligan J.T."/>
            <person name="Hennessy K.M."/>
            <person name="Yelton M.A."/>
            <person name="Allen E."/>
            <person name="Araujo R."/>
            <person name="Aviles E."/>
            <person name="Berno A."/>
            <person name="Brennan T."/>
            <person name="Carpenter J."/>
            <person name="Chen E."/>
            <person name="Cherry J.M."/>
            <person name="Chung E."/>
            <person name="Duncan M."/>
            <person name="Guzman E."/>
            <person name="Hartzell G."/>
            <person name="Hunicke-Smith S."/>
            <person name="Hyman R.W."/>
            <person name="Kayser A."/>
            <person name="Komp C."/>
            <person name="Lashkari D."/>
            <person name="Lew H."/>
            <person name="Lin D."/>
            <person name="Mosedale D."/>
            <person name="Nakahara K."/>
            <person name="Namath A."/>
            <person name="Norgren R."/>
            <person name="Oefner P."/>
            <person name="Oh C."/>
            <person name="Petel F.X."/>
            <person name="Roberts D."/>
            <person name="Sehl P."/>
            <person name="Schramm S."/>
            <person name="Shogren T."/>
            <person name="Smith V."/>
            <person name="Taylor P."/>
            <person name="Wei Y."/>
            <person name="Botstein D."/>
            <person name="Davis R.W."/>
        </authorList>
    </citation>
    <scope>NUCLEOTIDE SEQUENCE [LARGE SCALE GENOMIC DNA]</scope>
    <source>
        <strain>ATCC 204508 / S288c</strain>
    </source>
</reference>
<reference key="2">
    <citation type="journal article" date="2014" name="G3 (Bethesda)">
        <title>The reference genome sequence of Saccharomyces cerevisiae: Then and now.</title>
        <authorList>
            <person name="Engel S.R."/>
            <person name="Dietrich F.S."/>
            <person name="Fisk D.G."/>
            <person name="Binkley G."/>
            <person name="Balakrishnan R."/>
            <person name="Costanzo M.C."/>
            <person name="Dwight S.S."/>
            <person name="Hitz B.C."/>
            <person name="Karra K."/>
            <person name="Nash R.S."/>
            <person name="Weng S."/>
            <person name="Wong E.D."/>
            <person name="Lloyd P."/>
            <person name="Skrzypek M.S."/>
            <person name="Miyasato S.R."/>
            <person name="Simison M."/>
            <person name="Cherry J.M."/>
        </authorList>
    </citation>
    <scope>GENOME REANNOTATION</scope>
    <source>
        <strain>ATCC 204508 / S288c</strain>
    </source>
</reference>
<reference key="3">
    <citation type="journal article" date="2003" name="J. Biol. Chem.">
        <title>Topology models for 37 Saccharomyces cerevisiae membrane proteins based on C-terminal reporter fusions and predictions.</title>
        <authorList>
            <person name="Kim H."/>
            <person name="Melen K."/>
            <person name="von Heijne G."/>
        </authorList>
    </citation>
    <scope>PROBABLE TOPOLOGY</scope>
</reference>
<reference key="4">
    <citation type="journal article" date="2008" name="Eukaryot. Cell">
        <title>Role of PUG1 in inducible porphyrin and heme transport in Saccharomyces cerevisiae.</title>
        <authorList>
            <person name="Protchenko O."/>
            <person name="Shakoury-Elizeh M."/>
            <person name="Keane P."/>
            <person name="Storey J."/>
            <person name="Androphy R."/>
            <person name="Philpott C.C."/>
        </authorList>
    </citation>
    <scope>FUNCTION</scope>
    <scope>SUBCELLULAR LOCATION</scope>
    <scope>INDUCTION</scope>
</reference>
<reference key="5">
    <citation type="journal article" date="2009" name="Mol. Syst. Biol.">
        <title>Global analysis of the glycoproteome in Saccharomyces cerevisiae reveals new roles for protein glycosylation in eukaryotes.</title>
        <authorList>
            <person name="Kung L.A."/>
            <person name="Tao S.-C."/>
            <person name="Qian J."/>
            <person name="Smith M.G."/>
            <person name="Snyder M."/>
            <person name="Zhu H."/>
        </authorList>
    </citation>
    <scope>GLYCOSYLATION [LARGE SCALE ANALYSIS]</scope>
</reference>
<sequence>MSTTDSGFVLYHYTPSKAAAIVFVVLFIIMTVIFAVQTLYAARKSSKALKNNPFESSDDKVDSLEDAEYKQLKITPTVFAFIPFFTGCIMEAVGYIGRALSSSNPERTTPYIIQSVLLLVAPALIAATIYMIFGRLLHVMRCQSLILISARFGTTFFVVGDVFSFFLQAAGGGLMSKAGSTKTGSGLITAGLFVQVIFFGFFIINEIRFTVNVKRRCLFYEDISRKWIFVNATLLLSSMLILLRSIVRIVEFIQGFNGYIISHEYFIYVFDAVPMLLVIIAFSVGSFFGNVFDVIKECQTLSN</sequence>
<evidence type="ECO:0000255" key="1"/>
<evidence type="ECO:0000269" key="2">
    <source>
    </source>
</evidence>
<evidence type="ECO:0000269" key="3">
    <source>
    </source>
</evidence>
<evidence type="ECO:0000305" key="4"/>
<accession>P40100</accession>
<accession>D3DM94</accession>
<name>PUG1_YEAST</name>
<organism>
    <name type="scientific">Saccharomyces cerevisiae (strain ATCC 204508 / S288c)</name>
    <name type="common">Baker's yeast</name>
    <dbReference type="NCBI Taxonomy" id="559292"/>
    <lineage>
        <taxon>Eukaryota</taxon>
        <taxon>Fungi</taxon>
        <taxon>Dikarya</taxon>
        <taxon>Ascomycota</taxon>
        <taxon>Saccharomycotina</taxon>
        <taxon>Saccharomycetes</taxon>
        <taxon>Saccharomycetales</taxon>
        <taxon>Saccharomycetaceae</taxon>
        <taxon>Saccharomyces</taxon>
    </lineage>
</organism>
<keyword id="KW-1003">Cell membrane</keyword>
<keyword id="KW-0325">Glycoprotein</keyword>
<keyword id="KW-0472">Membrane</keyword>
<keyword id="KW-1185">Reference proteome</keyword>
<keyword id="KW-0812">Transmembrane</keyword>
<keyword id="KW-1133">Transmembrane helix</keyword>
<proteinExistence type="evidence at protein level"/>
<feature type="chain" id="PRO_0000202661" description="Protoporphyrin uptake protein 1">
    <location>
        <begin position="1"/>
        <end position="303"/>
    </location>
</feature>
<feature type="topological domain" description="Extracellular" evidence="1">
    <location>
        <begin position="1"/>
        <end position="18"/>
    </location>
</feature>
<feature type="transmembrane region" description="Helical" evidence="1">
    <location>
        <begin position="19"/>
        <end position="39"/>
    </location>
</feature>
<feature type="topological domain" description="Cytoplasmic" evidence="1">
    <location>
        <begin position="40"/>
        <end position="76"/>
    </location>
</feature>
<feature type="transmembrane region" description="Helical" evidence="1">
    <location>
        <begin position="77"/>
        <end position="97"/>
    </location>
</feature>
<feature type="topological domain" description="Extracellular" evidence="1">
    <location>
        <begin position="98"/>
        <end position="111"/>
    </location>
</feature>
<feature type="transmembrane region" description="Helical" evidence="1">
    <location>
        <begin position="112"/>
        <end position="132"/>
    </location>
</feature>
<feature type="topological domain" description="Cytoplasmic" evidence="1">
    <location>
        <begin position="133"/>
        <end position="154"/>
    </location>
</feature>
<feature type="transmembrane region" description="Helical" evidence="1">
    <location>
        <begin position="155"/>
        <end position="175"/>
    </location>
</feature>
<feature type="topological domain" description="Extracellular" evidence="1">
    <location>
        <begin position="176"/>
        <end position="183"/>
    </location>
</feature>
<feature type="transmembrane region" description="Helical" evidence="1">
    <location>
        <begin position="184"/>
        <end position="204"/>
    </location>
</feature>
<feature type="topological domain" description="Cytoplasmic" evidence="1">
    <location>
        <begin position="205"/>
        <end position="226"/>
    </location>
</feature>
<feature type="transmembrane region" description="Helical" evidence="1">
    <location>
        <begin position="227"/>
        <end position="247"/>
    </location>
</feature>
<feature type="topological domain" description="Extracellular" evidence="1">
    <location>
        <begin position="248"/>
        <end position="264"/>
    </location>
</feature>
<feature type="transmembrane region" description="Helical" evidence="1">
    <location>
        <begin position="265"/>
        <end position="285"/>
    </location>
</feature>
<feature type="topological domain" description="Cytoplasmic" evidence="1">
    <location>
        <begin position="286"/>
        <end position="303"/>
    </location>
</feature>
<protein>
    <recommendedName>
        <fullName>Protoporphyrin uptake protein 1</fullName>
    </recommendedName>
</protein>
<dbReference type="EMBL" id="U18922">
    <property type="protein sequence ID" value="AAB64712.1"/>
    <property type="molecule type" value="Genomic_DNA"/>
</dbReference>
<dbReference type="EMBL" id="BK006939">
    <property type="protein sequence ID" value="DAA07848.1"/>
    <property type="molecule type" value="Genomic_DNA"/>
</dbReference>
<dbReference type="PIR" id="S50688">
    <property type="entry name" value="S50688"/>
</dbReference>
<dbReference type="RefSeq" id="NP_011112.3">
    <property type="nucleotide sequence ID" value="NM_001179075.3"/>
</dbReference>
<dbReference type="BioGRID" id="36939">
    <property type="interactions" value="43"/>
</dbReference>
<dbReference type="FunCoup" id="P40100">
    <property type="interactions" value="44"/>
</dbReference>
<dbReference type="IntAct" id="P40100">
    <property type="interactions" value="1"/>
</dbReference>
<dbReference type="STRING" id="4932.YER185W"/>
<dbReference type="TCDB" id="9.A.26.1.3">
    <property type="family name" value="the lipid-translocating exporter (lte) family"/>
</dbReference>
<dbReference type="iPTMnet" id="P40100"/>
<dbReference type="PaxDb" id="4932-YER185W"/>
<dbReference type="PeptideAtlas" id="P40100"/>
<dbReference type="EnsemblFungi" id="YER185W_mRNA">
    <property type="protein sequence ID" value="YER185W"/>
    <property type="gene ID" value="YER185W"/>
</dbReference>
<dbReference type="GeneID" id="856934"/>
<dbReference type="KEGG" id="sce:YER185W"/>
<dbReference type="AGR" id="SGD:S000000987"/>
<dbReference type="SGD" id="S000000987">
    <property type="gene designation" value="PUG1"/>
</dbReference>
<dbReference type="VEuPathDB" id="FungiDB:YER185W"/>
<dbReference type="eggNOG" id="ENOG502QURG">
    <property type="taxonomic scope" value="Eukaryota"/>
</dbReference>
<dbReference type="GeneTree" id="ENSGT00940000176387"/>
<dbReference type="HOGENOM" id="CLU_033465_3_1_1"/>
<dbReference type="InParanoid" id="P40100"/>
<dbReference type="OMA" id="LMKHEVF"/>
<dbReference type="OrthoDB" id="3358017at2759"/>
<dbReference type="BioCyc" id="YEAST:G3O-30341-MONOMER"/>
<dbReference type="BioGRID-ORCS" id="856934">
    <property type="hits" value="1 hit in 10 CRISPR screens"/>
</dbReference>
<dbReference type="PRO" id="PR:P40100"/>
<dbReference type="Proteomes" id="UP000002311">
    <property type="component" value="Chromosome V"/>
</dbReference>
<dbReference type="RNAct" id="P40100">
    <property type="molecule type" value="protein"/>
</dbReference>
<dbReference type="GO" id="GO:0005886">
    <property type="term" value="C:plasma membrane"/>
    <property type="evidence" value="ECO:0000314"/>
    <property type="project" value="SGD"/>
</dbReference>
<dbReference type="GO" id="GO:0035351">
    <property type="term" value="P:heme transmembrane transport"/>
    <property type="evidence" value="ECO:0000315"/>
    <property type="project" value="SGD"/>
</dbReference>
<dbReference type="InterPro" id="IPR007568">
    <property type="entry name" value="RTA1"/>
</dbReference>
<dbReference type="PANTHER" id="PTHR31465">
    <property type="entry name" value="PROTEIN RTA1-RELATED"/>
    <property type="match status" value="1"/>
</dbReference>
<dbReference type="PANTHER" id="PTHR31465:SF1">
    <property type="entry name" value="PROTEIN RTA1-RELATED"/>
    <property type="match status" value="1"/>
</dbReference>
<dbReference type="Pfam" id="PF04479">
    <property type="entry name" value="RTA1"/>
    <property type="match status" value="1"/>
</dbReference>